<organism>
    <name type="scientific">Mus musculus</name>
    <name type="common">Mouse</name>
    <dbReference type="NCBI Taxonomy" id="10090"/>
    <lineage>
        <taxon>Eukaryota</taxon>
        <taxon>Metazoa</taxon>
        <taxon>Chordata</taxon>
        <taxon>Craniata</taxon>
        <taxon>Vertebrata</taxon>
        <taxon>Euteleostomi</taxon>
        <taxon>Mammalia</taxon>
        <taxon>Eutheria</taxon>
        <taxon>Euarchontoglires</taxon>
        <taxon>Glires</taxon>
        <taxon>Rodentia</taxon>
        <taxon>Myomorpha</taxon>
        <taxon>Muroidea</taxon>
        <taxon>Muridae</taxon>
        <taxon>Murinae</taxon>
        <taxon>Mus</taxon>
        <taxon>Mus</taxon>
    </lineage>
</organism>
<protein>
    <recommendedName>
        <fullName>FUN14 domain-containing protein 1</fullName>
    </recommendedName>
</protein>
<accession>Q9DB70</accession>
<accession>A2BEA3</accession>
<comment type="function">
    <text evidence="2 4">Integral mitochondrial outer-membrane protein that mediates the formation of mitochondria-associated endoplasmic reticulum membranes (MAMs). In turn, mediates angiogenesis and neoangiogenesis through interference with intracellular Ca(2+) communication and regulation of the vascular endothelial growth factor receptor KDR/VEGFR2 expression at both mRNA and protein levels. Also acts as an activator of hypoxia-induced mitophagy, an important mechanism for mitochondrial quality and homeostasis, by interacting with and recruiting LC3 protein family to mitochondria. Mechanistically, recruits DRP1 at ER-mitochondria contact sites leading to DRP1 oligomerization and GTPase activity to facilitate mitochondrial fission during hypoxia (By similarity). Additionally, plays a role in hepatic ferroptosis by interacting directly with glutathione peroxidase/GPX4 to facilitate its recruitment into mitochondria through TOM/TIM complex where it is degraded by mitophagy (PubMed:36828120).</text>
</comment>
<comment type="subunit">
    <text evidence="2">Interacts (via YXXL motif) with MAP1 LC3 family proteins MAP1LC3A, MAP1LC3B and GABARAP. Interacts with DNM1L/DPR1. Interacts with GPX4.</text>
</comment>
<comment type="interaction">
    <interactant intactId="EBI-10106464">
        <id>Q9DB70</id>
    </interactant>
    <interactant intactId="EBI-8390771">
        <id>O70405</id>
        <label>Ulk1</label>
    </interactant>
    <organismsDiffer>false</organismsDiffer>
    <experiments>2</experiments>
</comment>
<comment type="subcellular location">
    <subcellularLocation>
        <location evidence="2">Mitochondrion outer membrane</location>
        <topology evidence="2">Multi-pass membrane protein</topology>
    </subcellularLocation>
</comment>
<comment type="domain">
    <text evidence="1">The YXXL motif mediates the interaction with MAP1 LC3 family proteins MAP1LC3A, MAP1LC3B and GABARAP.</text>
</comment>
<comment type="PTM">
    <text evidence="2">Phosphorylation at Ser-13 by CK2 and at Tyr-18 by SRC inhibits activation of mitophagy. Following hypoxia, dephosphorylated at Tyr-18, leading to interaction with MAP1 LC3 family proteins and triggering mitophagy. Dephosphorylation is mediated by PGAM5. Phosphorylated by ULK1 at Ser-17 which enhances FUNDC1 binding to LC3.</text>
</comment>
<comment type="PTM">
    <text evidence="2">Ubiquitinated on Lys-119. Deubiquitinated by USP19; leading to hypoxia-induced DRP1 oligomerization and GTPase activity.</text>
</comment>
<comment type="disruption phenotype">
    <text evidence="4">Deletion mutant mice challenged with CCl4 show a higher survival rate than WT mice.</text>
</comment>
<comment type="similarity">
    <text evidence="5">Belongs to the FUN14 family.</text>
</comment>
<reference key="1">
    <citation type="journal article" date="2005" name="Science">
        <title>The transcriptional landscape of the mammalian genome.</title>
        <authorList>
            <person name="Carninci P."/>
            <person name="Kasukawa T."/>
            <person name="Katayama S."/>
            <person name="Gough J."/>
            <person name="Frith M.C."/>
            <person name="Maeda N."/>
            <person name="Oyama R."/>
            <person name="Ravasi T."/>
            <person name="Lenhard B."/>
            <person name="Wells C."/>
            <person name="Kodzius R."/>
            <person name="Shimokawa K."/>
            <person name="Bajic V.B."/>
            <person name="Brenner S.E."/>
            <person name="Batalov S."/>
            <person name="Forrest A.R."/>
            <person name="Zavolan M."/>
            <person name="Davis M.J."/>
            <person name="Wilming L.G."/>
            <person name="Aidinis V."/>
            <person name="Allen J.E."/>
            <person name="Ambesi-Impiombato A."/>
            <person name="Apweiler R."/>
            <person name="Aturaliya R.N."/>
            <person name="Bailey T.L."/>
            <person name="Bansal M."/>
            <person name="Baxter L."/>
            <person name="Beisel K.W."/>
            <person name="Bersano T."/>
            <person name="Bono H."/>
            <person name="Chalk A.M."/>
            <person name="Chiu K.P."/>
            <person name="Choudhary V."/>
            <person name="Christoffels A."/>
            <person name="Clutterbuck D.R."/>
            <person name="Crowe M.L."/>
            <person name="Dalla E."/>
            <person name="Dalrymple B.P."/>
            <person name="de Bono B."/>
            <person name="Della Gatta G."/>
            <person name="di Bernardo D."/>
            <person name="Down T."/>
            <person name="Engstrom P."/>
            <person name="Fagiolini M."/>
            <person name="Faulkner G."/>
            <person name="Fletcher C.F."/>
            <person name="Fukushima T."/>
            <person name="Furuno M."/>
            <person name="Futaki S."/>
            <person name="Gariboldi M."/>
            <person name="Georgii-Hemming P."/>
            <person name="Gingeras T.R."/>
            <person name="Gojobori T."/>
            <person name="Green R.E."/>
            <person name="Gustincich S."/>
            <person name="Harbers M."/>
            <person name="Hayashi Y."/>
            <person name="Hensch T.K."/>
            <person name="Hirokawa N."/>
            <person name="Hill D."/>
            <person name="Huminiecki L."/>
            <person name="Iacono M."/>
            <person name="Ikeo K."/>
            <person name="Iwama A."/>
            <person name="Ishikawa T."/>
            <person name="Jakt M."/>
            <person name="Kanapin A."/>
            <person name="Katoh M."/>
            <person name="Kawasawa Y."/>
            <person name="Kelso J."/>
            <person name="Kitamura H."/>
            <person name="Kitano H."/>
            <person name="Kollias G."/>
            <person name="Krishnan S.P."/>
            <person name="Kruger A."/>
            <person name="Kummerfeld S.K."/>
            <person name="Kurochkin I.V."/>
            <person name="Lareau L.F."/>
            <person name="Lazarevic D."/>
            <person name="Lipovich L."/>
            <person name="Liu J."/>
            <person name="Liuni S."/>
            <person name="McWilliam S."/>
            <person name="Madan Babu M."/>
            <person name="Madera M."/>
            <person name="Marchionni L."/>
            <person name="Matsuda H."/>
            <person name="Matsuzawa S."/>
            <person name="Miki H."/>
            <person name="Mignone F."/>
            <person name="Miyake S."/>
            <person name="Morris K."/>
            <person name="Mottagui-Tabar S."/>
            <person name="Mulder N."/>
            <person name="Nakano N."/>
            <person name="Nakauchi H."/>
            <person name="Ng P."/>
            <person name="Nilsson R."/>
            <person name="Nishiguchi S."/>
            <person name="Nishikawa S."/>
            <person name="Nori F."/>
            <person name="Ohara O."/>
            <person name="Okazaki Y."/>
            <person name="Orlando V."/>
            <person name="Pang K.C."/>
            <person name="Pavan W.J."/>
            <person name="Pavesi G."/>
            <person name="Pesole G."/>
            <person name="Petrovsky N."/>
            <person name="Piazza S."/>
            <person name="Reed J."/>
            <person name="Reid J.F."/>
            <person name="Ring B.Z."/>
            <person name="Ringwald M."/>
            <person name="Rost B."/>
            <person name="Ruan Y."/>
            <person name="Salzberg S.L."/>
            <person name="Sandelin A."/>
            <person name="Schneider C."/>
            <person name="Schoenbach C."/>
            <person name="Sekiguchi K."/>
            <person name="Semple C.A."/>
            <person name="Seno S."/>
            <person name="Sessa L."/>
            <person name="Sheng Y."/>
            <person name="Shibata Y."/>
            <person name="Shimada H."/>
            <person name="Shimada K."/>
            <person name="Silva D."/>
            <person name="Sinclair B."/>
            <person name="Sperling S."/>
            <person name="Stupka E."/>
            <person name="Sugiura K."/>
            <person name="Sultana R."/>
            <person name="Takenaka Y."/>
            <person name="Taki K."/>
            <person name="Tammoja K."/>
            <person name="Tan S.L."/>
            <person name="Tang S."/>
            <person name="Taylor M.S."/>
            <person name="Tegner J."/>
            <person name="Teichmann S.A."/>
            <person name="Ueda H.R."/>
            <person name="van Nimwegen E."/>
            <person name="Verardo R."/>
            <person name="Wei C.L."/>
            <person name="Yagi K."/>
            <person name="Yamanishi H."/>
            <person name="Zabarovsky E."/>
            <person name="Zhu S."/>
            <person name="Zimmer A."/>
            <person name="Hide W."/>
            <person name="Bult C."/>
            <person name="Grimmond S.M."/>
            <person name="Teasdale R.D."/>
            <person name="Liu E.T."/>
            <person name="Brusic V."/>
            <person name="Quackenbush J."/>
            <person name="Wahlestedt C."/>
            <person name="Mattick J.S."/>
            <person name="Hume D.A."/>
            <person name="Kai C."/>
            <person name="Sasaki D."/>
            <person name="Tomaru Y."/>
            <person name="Fukuda S."/>
            <person name="Kanamori-Katayama M."/>
            <person name="Suzuki M."/>
            <person name="Aoki J."/>
            <person name="Arakawa T."/>
            <person name="Iida J."/>
            <person name="Imamura K."/>
            <person name="Itoh M."/>
            <person name="Kato T."/>
            <person name="Kawaji H."/>
            <person name="Kawagashira N."/>
            <person name="Kawashima T."/>
            <person name="Kojima M."/>
            <person name="Kondo S."/>
            <person name="Konno H."/>
            <person name="Nakano K."/>
            <person name="Ninomiya N."/>
            <person name="Nishio T."/>
            <person name="Okada M."/>
            <person name="Plessy C."/>
            <person name="Shibata K."/>
            <person name="Shiraki T."/>
            <person name="Suzuki S."/>
            <person name="Tagami M."/>
            <person name="Waki K."/>
            <person name="Watahiki A."/>
            <person name="Okamura-Oho Y."/>
            <person name="Suzuki H."/>
            <person name="Kawai J."/>
            <person name="Hayashizaki Y."/>
        </authorList>
    </citation>
    <scope>NUCLEOTIDE SEQUENCE [LARGE SCALE MRNA]</scope>
    <source>
        <strain>C57BL/6J</strain>
        <tissue>Cerebellum</tissue>
        <tissue>Kidney</tissue>
    </source>
</reference>
<reference key="2">
    <citation type="journal article" date="2009" name="PLoS Biol.">
        <title>Lineage-specific biology revealed by a finished genome assembly of the mouse.</title>
        <authorList>
            <person name="Church D.M."/>
            <person name="Goodstadt L."/>
            <person name="Hillier L.W."/>
            <person name="Zody M.C."/>
            <person name="Goldstein S."/>
            <person name="She X."/>
            <person name="Bult C.J."/>
            <person name="Agarwala R."/>
            <person name="Cherry J.L."/>
            <person name="DiCuccio M."/>
            <person name="Hlavina W."/>
            <person name="Kapustin Y."/>
            <person name="Meric P."/>
            <person name="Maglott D."/>
            <person name="Birtle Z."/>
            <person name="Marques A.C."/>
            <person name="Graves T."/>
            <person name="Zhou S."/>
            <person name="Teague B."/>
            <person name="Potamousis K."/>
            <person name="Churas C."/>
            <person name="Place M."/>
            <person name="Herschleb J."/>
            <person name="Runnheim R."/>
            <person name="Forrest D."/>
            <person name="Amos-Landgraf J."/>
            <person name="Schwartz D.C."/>
            <person name="Cheng Z."/>
            <person name="Lindblad-Toh K."/>
            <person name="Eichler E.E."/>
            <person name="Ponting C.P."/>
        </authorList>
    </citation>
    <scope>NUCLEOTIDE SEQUENCE [LARGE SCALE GENOMIC DNA]</scope>
    <source>
        <strain>C57BL/6J</strain>
    </source>
</reference>
<reference key="3">
    <citation type="submission" date="2005-07" db="EMBL/GenBank/DDBJ databases">
        <authorList>
            <person name="Mural R.J."/>
            <person name="Adams M.D."/>
            <person name="Myers E.W."/>
            <person name="Smith H.O."/>
            <person name="Venter J.C."/>
        </authorList>
    </citation>
    <scope>NUCLEOTIDE SEQUENCE [LARGE SCALE GENOMIC DNA]</scope>
</reference>
<reference key="4">
    <citation type="journal article" date="2004" name="Genome Res.">
        <title>The status, quality, and expansion of the NIH full-length cDNA project: the Mammalian Gene Collection (MGC).</title>
        <authorList>
            <consortium name="The MGC Project Team"/>
        </authorList>
    </citation>
    <scope>NUCLEOTIDE SEQUENCE [LARGE SCALE MRNA]</scope>
    <source>
        <strain>Czech II</strain>
        <strain>FVB/N-3</strain>
        <tissue>Mammary tumor</tissue>
    </source>
</reference>
<reference key="5">
    <citation type="journal article" date="2010" name="Cell">
        <title>A tissue-specific atlas of mouse protein phosphorylation and expression.</title>
        <authorList>
            <person name="Huttlin E.L."/>
            <person name="Jedrychowski M.P."/>
            <person name="Elias J.E."/>
            <person name="Goswami T."/>
            <person name="Rad R."/>
            <person name="Beausoleil S.A."/>
            <person name="Villen J."/>
            <person name="Haas W."/>
            <person name="Sowa M.E."/>
            <person name="Gygi S.P."/>
        </authorList>
    </citation>
    <scope>PHOSPHORYLATION [LARGE SCALE ANALYSIS] AT SER-13</scope>
    <scope>IDENTIFICATION BY MASS SPECTROMETRY [LARGE SCALE ANALYSIS]</scope>
    <source>
        <tissue>Brain</tissue>
        <tissue>Brown adipose tissue</tissue>
        <tissue>Kidney</tissue>
        <tissue>Liver</tissue>
        <tissue>Lung</tissue>
        <tissue>Pancreas</tissue>
        <tissue>Spleen</tissue>
        <tissue>Testis</tissue>
    </source>
</reference>
<reference key="6">
    <citation type="journal article" date="2023" name="J. Adv. Res.">
        <title>FUNDC1 interacts with GPx4 to govern hepatic ferroptosis and fibrotic injury through a mitophagy-dependent manner.</title>
        <authorList>
            <person name="Bi Y."/>
            <person name="Liu S."/>
            <person name="Qin X."/>
            <person name="Abudureyimu M."/>
            <person name="Wang L."/>
            <person name="Zou R."/>
            <person name="Ajoolabady A."/>
            <person name="Zhang W."/>
            <person name="Peng H."/>
            <person name="Ren J."/>
            <person name="Zhang Y."/>
        </authorList>
    </citation>
    <scope>FUNCTION</scope>
    <scope>DISRUPTION PHENOTYPE</scope>
</reference>
<evidence type="ECO:0000250" key="1"/>
<evidence type="ECO:0000250" key="2">
    <source>
        <dbReference type="UniProtKB" id="Q8IVP5"/>
    </source>
</evidence>
<evidence type="ECO:0000255" key="3"/>
<evidence type="ECO:0000269" key="4">
    <source>
    </source>
</evidence>
<evidence type="ECO:0000305" key="5"/>
<evidence type="ECO:0007744" key="6">
    <source>
    </source>
</evidence>
<keyword id="KW-0072">Autophagy</keyword>
<keyword id="KW-1017">Isopeptide bond</keyword>
<keyword id="KW-0472">Membrane</keyword>
<keyword id="KW-0496">Mitochondrion</keyword>
<keyword id="KW-1000">Mitochondrion outer membrane</keyword>
<keyword id="KW-0597">Phosphoprotein</keyword>
<keyword id="KW-1185">Reference proteome</keyword>
<keyword id="KW-0812">Transmembrane</keyword>
<keyword id="KW-1133">Transmembrane helix</keyword>
<keyword id="KW-0832">Ubl conjugation</keyword>
<name>FUND1_MOUSE</name>
<feature type="chain" id="PRO_0000271346" description="FUN14 domain-containing protein 1">
    <location>
        <begin position="1"/>
        <end position="155"/>
    </location>
</feature>
<feature type="topological domain" description="Cytoplasmic" evidence="3">
    <location>
        <begin position="1"/>
        <end position="47"/>
    </location>
</feature>
<feature type="transmembrane region" description="Helical" evidence="3">
    <location>
        <begin position="48"/>
        <end position="68"/>
    </location>
</feature>
<feature type="topological domain" description="Mitochondrial intermembrane" evidence="3">
    <location>
        <begin position="69"/>
        <end position="74"/>
    </location>
</feature>
<feature type="transmembrane region" description="Helical" evidence="3">
    <location>
        <begin position="75"/>
        <end position="95"/>
    </location>
</feature>
<feature type="topological domain" description="Cytoplasmic" evidence="3">
    <location>
        <begin position="96"/>
        <end position="133"/>
    </location>
</feature>
<feature type="transmembrane region" description="Helical" evidence="3">
    <location>
        <begin position="134"/>
        <end position="154"/>
    </location>
</feature>
<feature type="topological domain" description="Mitochondrial intermembrane" evidence="3">
    <location>
        <position position="155"/>
    </location>
</feature>
<feature type="short sequence motif" description="YXXL">
    <location>
        <begin position="18"/>
        <end position="21"/>
    </location>
</feature>
<feature type="modified residue" description="Phosphoserine" evidence="6">
    <location>
        <position position="13"/>
    </location>
</feature>
<feature type="modified residue" description="Phosphoserine" evidence="2">
    <location>
        <position position="17"/>
    </location>
</feature>
<feature type="modified residue" description="Phosphotyrosine; by SRC" evidence="2">
    <location>
        <position position="18"/>
    </location>
</feature>
<feature type="cross-link" description="Glycyl lysine isopeptide (Lys-Gly) (interchain with G-Cter in ubiquitin)" evidence="2">
    <location>
        <position position="119"/>
    </location>
</feature>
<dbReference type="EMBL" id="AK005163">
    <property type="protein sequence ID" value="BAB23854.1"/>
    <property type="molecule type" value="mRNA"/>
</dbReference>
<dbReference type="EMBL" id="AK168868">
    <property type="protein sequence ID" value="BAE40687.1"/>
    <property type="molecule type" value="mRNA"/>
</dbReference>
<dbReference type="EMBL" id="BX005345">
    <property type="status" value="NOT_ANNOTATED_CDS"/>
    <property type="molecule type" value="Genomic_DNA"/>
</dbReference>
<dbReference type="EMBL" id="CH466584">
    <property type="protein sequence ID" value="EDL35721.1"/>
    <property type="molecule type" value="Genomic_DNA"/>
</dbReference>
<dbReference type="EMBL" id="BC012515">
    <property type="protein sequence ID" value="AAH12515.1"/>
    <property type="molecule type" value="mRNA"/>
</dbReference>
<dbReference type="EMBL" id="BC030487">
    <property type="protein sequence ID" value="AAH30487.1"/>
    <property type="molecule type" value="mRNA"/>
</dbReference>
<dbReference type="CCDS" id="CCDS30035.1"/>
<dbReference type="RefSeq" id="NP_001300674.1">
    <property type="nucleotide sequence ID" value="NM_001313745.1"/>
</dbReference>
<dbReference type="RefSeq" id="NP_082334.1">
    <property type="nucleotide sequence ID" value="NM_028058.4"/>
</dbReference>
<dbReference type="FunCoup" id="Q9DB70">
    <property type="interactions" value="396"/>
</dbReference>
<dbReference type="IntAct" id="Q9DB70">
    <property type="interactions" value="1"/>
</dbReference>
<dbReference type="MINT" id="Q9DB70"/>
<dbReference type="STRING" id="10090.ENSMUSP00000026016"/>
<dbReference type="iPTMnet" id="Q9DB70"/>
<dbReference type="PhosphoSitePlus" id="Q9DB70"/>
<dbReference type="jPOST" id="Q9DB70"/>
<dbReference type="PaxDb" id="10090-ENSMUSP00000026016"/>
<dbReference type="PeptideAtlas" id="Q9DB70"/>
<dbReference type="ProteomicsDB" id="271613"/>
<dbReference type="Pumba" id="Q9DB70"/>
<dbReference type="Antibodypedia" id="25165">
    <property type="antibodies" value="225 antibodies from 27 providers"/>
</dbReference>
<dbReference type="DNASU" id="72018"/>
<dbReference type="Ensembl" id="ENSMUST00000026016.13">
    <property type="protein sequence ID" value="ENSMUSP00000026016.7"/>
    <property type="gene ID" value="ENSMUSG00000025040.14"/>
</dbReference>
<dbReference type="GeneID" id="72018"/>
<dbReference type="KEGG" id="mmu:72018"/>
<dbReference type="UCSC" id="uc009ssf.1">
    <property type="organism name" value="mouse"/>
</dbReference>
<dbReference type="AGR" id="MGI:1919268"/>
<dbReference type="CTD" id="139341"/>
<dbReference type="MGI" id="MGI:1919268">
    <property type="gene designation" value="Fundc1"/>
</dbReference>
<dbReference type="VEuPathDB" id="HostDB:ENSMUSG00000025040"/>
<dbReference type="eggNOG" id="KOG4099">
    <property type="taxonomic scope" value="Eukaryota"/>
</dbReference>
<dbReference type="GeneTree" id="ENSGT00940000154517"/>
<dbReference type="InParanoid" id="Q9DB70"/>
<dbReference type="OMA" id="NAPPQEY"/>
<dbReference type="OrthoDB" id="163794at2759"/>
<dbReference type="PhylomeDB" id="Q9DB70"/>
<dbReference type="TreeFam" id="TF300280"/>
<dbReference type="Reactome" id="R-MMU-8934903">
    <property type="pathway name" value="Receptor Mediated Mitophagy"/>
</dbReference>
<dbReference type="BioGRID-ORCS" id="72018">
    <property type="hits" value="2 hits in 77 CRISPR screens"/>
</dbReference>
<dbReference type="ChiTaRS" id="Fundc1">
    <property type="organism name" value="mouse"/>
</dbReference>
<dbReference type="PRO" id="PR:Q9DB70"/>
<dbReference type="Proteomes" id="UP000000589">
    <property type="component" value="Chromosome X"/>
</dbReference>
<dbReference type="RNAct" id="Q9DB70">
    <property type="molecule type" value="protein"/>
</dbReference>
<dbReference type="Bgee" id="ENSMUSG00000025040">
    <property type="expression patterns" value="Expressed in facial nucleus and 255 other cell types or tissues"/>
</dbReference>
<dbReference type="ExpressionAtlas" id="Q9DB70">
    <property type="expression patterns" value="baseline and differential"/>
</dbReference>
<dbReference type="GO" id="GO:0005741">
    <property type="term" value="C:mitochondrial outer membrane"/>
    <property type="evidence" value="ECO:0000250"/>
    <property type="project" value="UniProtKB"/>
</dbReference>
<dbReference type="GO" id="GO:0000422">
    <property type="term" value="P:autophagy of mitochondrion"/>
    <property type="evidence" value="ECO:0000250"/>
    <property type="project" value="UniProtKB"/>
</dbReference>
<dbReference type="GO" id="GO:0008053">
    <property type="term" value="P:mitochondrial fusion"/>
    <property type="evidence" value="ECO:0007669"/>
    <property type="project" value="Ensembl"/>
</dbReference>
<dbReference type="GO" id="GO:0000423">
    <property type="term" value="P:mitophagy"/>
    <property type="evidence" value="ECO:0007669"/>
    <property type="project" value="Ensembl"/>
</dbReference>
<dbReference type="GO" id="GO:0001666">
    <property type="term" value="P:response to hypoxia"/>
    <property type="evidence" value="ECO:0000250"/>
    <property type="project" value="UniProtKB"/>
</dbReference>
<dbReference type="InterPro" id="IPR007014">
    <property type="entry name" value="FUN14"/>
</dbReference>
<dbReference type="PANTHER" id="PTHR21346">
    <property type="entry name" value="FUN14 DOMAIN CONTAINING"/>
    <property type="match status" value="1"/>
</dbReference>
<dbReference type="PANTHER" id="PTHR21346:SF2">
    <property type="entry name" value="FUN14 DOMAIN-CONTAINING PROTEIN 1"/>
    <property type="match status" value="1"/>
</dbReference>
<dbReference type="Pfam" id="PF04930">
    <property type="entry name" value="FUN14"/>
    <property type="match status" value="1"/>
</dbReference>
<sequence length="155" mass="17159">MASRNPPPQDYESDDESYEVLDLTEYARRHHWWNRVFGHSSGPMVEKYSVATQIVMGGVTGWCAGFLFQKVGKLAATAVGGGFLLLQVASHSGYVQIDWKRVEKDVNKAKRQIKKRANKAAPEINNIIEEATDFIKQNIVISSGFVGGFLLGLAS</sequence>
<proteinExistence type="evidence at protein level"/>
<gene>
    <name type="primary">Fundc1</name>
</gene>